<gene>
    <name evidence="1" type="primary">glyS</name>
    <name type="ordered locus">ECA0085</name>
</gene>
<protein>
    <recommendedName>
        <fullName evidence="1">Glycine--tRNA ligase beta subunit</fullName>
        <ecNumber evidence="1">6.1.1.14</ecNumber>
    </recommendedName>
    <alternativeName>
        <fullName evidence="1">Glycyl-tRNA synthetase beta subunit</fullName>
        <shortName evidence="1">GlyRS</shortName>
    </alternativeName>
</protein>
<reference key="1">
    <citation type="journal article" date="2004" name="Proc. Natl. Acad. Sci. U.S.A.">
        <title>Genome sequence of the enterobacterial phytopathogen Erwinia carotovora subsp. atroseptica and characterization of virulence factors.</title>
        <authorList>
            <person name="Bell K.S."/>
            <person name="Sebaihia M."/>
            <person name="Pritchard L."/>
            <person name="Holden M.T.G."/>
            <person name="Hyman L.J."/>
            <person name="Holeva M.C."/>
            <person name="Thomson N.R."/>
            <person name="Bentley S.D."/>
            <person name="Churcher L.J.C."/>
            <person name="Mungall K."/>
            <person name="Atkin R."/>
            <person name="Bason N."/>
            <person name="Brooks K."/>
            <person name="Chillingworth T."/>
            <person name="Clark K."/>
            <person name="Doggett J."/>
            <person name="Fraser A."/>
            <person name="Hance Z."/>
            <person name="Hauser H."/>
            <person name="Jagels K."/>
            <person name="Moule S."/>
            <person name="Norbertczak H."/>
            <person name="Ormond D."/>
            <person name="Price C."/>
            <person name="Quail M.A."/>
            <person name="Sanders M."/>
            <person name="Walker D."/>
            <person name="Whitehead S."/>
            <person name="Salmond G.P.C."/>
            <person name="Birch P.R.J."/>
            <person name="Parkhill J."/>
            <person name="Toth I.K."/>
        </authorList>
    </citation>
    <scope>NUCLEOTIDE SEQUENCE [LARGE SCALE GENOMIC DNA]</scope>
    <source>
        <strain>SCRI 1043 / ATCC BAA-672</strain>
    </source>
</reference>
<comment type="catalytic activity">
    <reaction evidence="1">
        <text>tRNA(Gly) + glycine + ATP = glycyl-tRNA(Gly) + AMP + diphosphate</text>
        <dbReference type="Rhea" id="RHEA:16013"/>
        <dbReference type="Rhea" id="RHEA-COMP:9664"/>
        <dbReference type="Rhea" id="RHEA-COMP:9683"/>
        <dbReference type="ChEBI" id="CHEBI:30616"/>
        <dbReference type="ChEBI" id="CHEBI:33019"/>
        <dbReference type="ChEBI" id="CHEBI:57305"/>
        <dbReference type="ChEBI" id="CHEBI:78442"/>
        <dbReference type="ChEBI" id="CHEBI:78522"/>
        <dbReference type="ChEBI" id="CHEBI:456215"/>
        <dbReference type="EC" id="6.1.1.14"/>
    </reaction>
</comment>
<comment type="subunit">
    <text evidence="1">Tetramer of two alpha and two beta subunits.</text>
</comment>
<comment type="subcellular location">
    <subcellularLocation>
        <location evidence="1">Cytoplasm</location>
    </subcellularLocation>
</comment>
<comment type="similarity">
    <text evidence="1">Belongs to the class-II aminoacyl-tRNA synthetase family.</text>
</comment>
<keyword id="KW-0030">Aminoacyl-tRNA synthetase</keyword>
<keyword id="KW-0067">ATP-binding</keyword>
<keyword id="KW-0963">Cytoplasm</keyword>
<keyword id="KW-0436">Ligase</keyword>
<keyword id="KW-0547">Nucleotide-binding</keyword>
<keyword id="KW-0648">Protein biosynthesis</keyword>
<keyword id="KW-1185">Reference proteome</keyword>
<sequence>MTDKTFLVEIGTEELPPKALRNLAESFAANFTAELDAANLAHGDVSWFAAPRRLALKVARLSASQPDREVEKRGPAISQAFDAEGKPTKAAEGWARGCGITVEQAERLTTDKGEWLLYRAHAKGEQAQALLAGMVSTALSKLPIPKLMRWSDKETQFVRPVHTVTLLLGEELIPGQVLGIHSARTIRGHRFMGEAEFTIDNAEQYPQILLERGKVVADYDARKAKIKADAEDAARKIGGNADLSDSLLEEVTSLVEWPVVLTAKFEEKFLAVPSEALVYTMKGDQKYFPVYDNSGNLLPHFIFVANIESKDPQQIISGNEKVVRPRLADAEFFFNTDRKKRLEDHLPRLETVLFQQQLGSLRDKTDRIQALAGWVASQIGADVNHATRAGLLSKCDLMTNMVFEFTDTQGVMGMHYARHDGEAEDVAVALNEQYQPRFAGDELPSSAVACALAIADKMDSLAGIFGIGQHPKGDKDPFALRRAALGVLRIIVEKRLPLDLQTLTEEAVRLYGTKLTNTKAVDEVIEFMLGRFRAWYQEEGHSVDTIQAVLARRPTRPADFDARVKAVSHFRSLDAAAALAAANKRVSNILAKSTDKLNESVNAAVLKDAAEITLATHLVVLRDKLTPLFAEGRYQEALVELASLREPVDAFFDQVMVMAEDEQVRVNRLTLLSQLRELFLQVADISVLQ</sequence>
<feature type="chain" id="PRO_1000006360" description="Glycine--tRNA ligase beta subunit">
    <location>
        <begin position="1"/>
        <end position="689"/>
    </location>
</feature>
<name>SYGB_PECAS</name>
<accession>Q6DB17</accession>
<dbReference type="EC" id="6.1.1.14" evidence="1"/>
<dbReference type="EMBL" id="BX950851">
    <property type="protein sequence ID" value="CAG73005.1"/>
    <property type="molecule type" value="Genomic_DNA"/>
</dbReference>
<dbReference type="RefSeq" id="WP_011091728.1">
    <property type="nucleotide sequence ID" value="NC_004547.2"/>
</dbReference>
<dbReference type="SMR" id="Q6DB17"/>
<dbReference type="STRING" id="218491.ECA0085"/>
<dbReference type="KEGG" id="eca:ECA0085"/>
<dbReference type="PATRIC" id="fig|218491.5.peg.87"/>
<dbReference type="eggNOG" id="COG0751">
    <property type="taxonomic scope" value="Bacteria"/>
</dbReference>
<dbReference type="HOGENOM" id="CLU_007220_2_2_6"/>
<dbReference type="OrthoDB" id="9775440at2"/>
<dbReference type="Proteomes" id="UP000007966">
    <property type="component" value="Chromosome"/>
</dbReference>
<dbReference type="GO" id="GO:0005829">
    <property type="term" value="C:cytosol"/>
    <property type="evidence" value="ECO:0007669"/>
    <property type="project" value="TreeGrafter"/>
</dbReference>
<dbReference type="GO" id="GO:0004814">
    <property type="term" value="F:arginine-tRNA ligase activity"/>
    <property type="evidence" value="ECO:0007669"/>
    <property type="project" value="InterPro"/>
</dbReference>
<dbReference type="GO" id="GO:0005524">
    <property type="term" value="F:ATP binding"/>
    <property type="evidence" value="ECO:0007669"/>
    <property type="project" value="UniProtKB-UniRule"/>
</dbReference>
<dbReference type="GO" id="GO:0004820">
    <property type="term" value="F:glycine-tRNA ligase activity"/>
    <property type="evidence" value="ECO:0007669"/>
    <property type="project" value="UniProtKB-UniRule"/>
</dbReference>
<dbReference type="GO" id="GO:0006420">
    <property type="term" value="P:arginyl-tRNA aminoacylation"/>
    <property type="evidence" value="ECO:0007669"/>
    <property type="project" value="InterPro"/>
</dbReference>
<dbReference type="GO" id="GO:0006426">
    <property type="term" value="P:glycyl-tRNA aminoacylation"/>
    <property type="evidence" value="ECO:0007669"/>
    <property type="project" value="UniProtKB-UniRule"/>
</dbReference>
<dbReference type="HAMAP" id="MF_00255">
    <property type="entry name" value="Gly_tRNA_synth_beta"/>
    <property type="match status" value="1"/>
</dbReference>
<dbReference type="InterPro" id="IPR008909">
    <property type="entry name" value="DALR_anticod-bd"/>
</dbReference>
<dbReference type="InterPro" id="IPR015944">
    <property type="entry name" value="Gly-tRNA-synth_bsu"/>
</dbReference>
<dbReference type="InterPro" id="IPR006194">
    <property type="entry name" value="Gly-tRNA-synth_heterodimer"/>
</dbReference>
<dbReference type="NCBIfam" id="TIGR00211">
    <property type="entry name" value="glyS"/>
    <property type="match status" value="1"/>
</dbReference>
<dbReference type="PANTHER" id="PTHR30075:SF2">
    <property type="entry name" value="GLYCINE--TRNA LIGASE, CHLOROPLASTIC_MITOCHONDRIAL 2"/>
    <property type="match status" value="1"/>
</dbReference>
<dbReference type="PANTHER" id="PTHR30075">
    <property type="entry name" value="GLYCYL-TRNA SYNTHETASE"/>
    <property type="match status" value="1"/>
</dbReference>
<dbReference type="Pfam" id="PF05746">
    <property type="entry name" value="DALR_1"/>
    <property type="match status" value="1"/>
</dbReference>
<dbReference type="Pfam" id="PF02092">
    <property type="entry name" value="tRNA_synt_2f"/>
    <property type="match status" value="1"/>
</dbReference>
<dbReference type="PRINTS" id="PR01045">
    <property type="entry name" value="TRNASYNTHGB"/>
</dbReference>
<dbReference type="SUPFAM" id="SSF109604">
    <property type="entry name" value="HD-domain/PDEase-like"/>
    <property type="match status" value="1"/>
</dbReference>
<dbReference type="PROSITE" id="PS50861">
    <property type="entry name" value="AA_TRNA_LIGASE_II_GLYAB"/>
    <property type="match status" value="1"/>
</dbReference>
<proteinExistence type="inferred from homology"/>
<organism>
    <name type="scientific">Pectobacterium atrosepticum (strain SCRI 1043 / ATCC BAA-672)</name>
    <name type="common">Erwinia carotovora subsp. atroseptica</name>
    <dbReference type="NCBI Taxonomy" id="218491"/>
    <lineage>
        <taxon>Bacteria</taxon>
        <taxon>Pseudomonadati</taxon>
        <taxon>Pseudomonadota</taxon>
        <taxon>Gammaproteobacteria</taxon>
        <taxon>Enterobacterales</taxon>
        <taxon>Pectobacteriaceae</taxon>
        <taxon>Pectobacterium</taxon>
    </lineage>
</organism>
<evidence type="ECO:0000255" key="1">
    <source>
        <dbReference type="HAMAP-Rule" id="MF_00255"/>
    </source>
</evidence>